<evidence type="ECO:0000256" key="1">
    <source>
        <dbReference type="SAM" id="MobiDB-lite"/>
    </source>
</evidence>
<proteinExistence type="predicted"/>
<gene>
    <name type="primary">yffL</name>
    <name type="ordered locus">b2443</name>
</gene>
<protein>
    <recommendedName>
        <fullName>Uncharacterized protein YffL</fullName>
    </recommendedName>
</protein>
<accession>P76543</accession>
<keyword id="KW-1185">Reference proteome</keyword>
<dbReference type="EMBL" id="U00096">
    <property type="protein sequence ID" value="AAC75496.1"/>
    <property type="molecule type" value="Genomic_DNA"/>
</dbReference>
<dbReference type="PIR" id="B65019">
    <property type="entry name" value="B65019"/>
</dbReference>
<dbReference type="RefSeq" id="NP_416938.1">
    <property type="nucleotide sequence ID" value="NC_000913.3"/>
</dbReference>
<dbReference type="RefSeq" id="WP_000458337.1">
    <property type="nucleotide sequence ID" value="NZ_JACEFS010000004.1"/>
</dbReference>
<dbReference type="SMR" id="P76543"/>
<dbReference type="DIP" id="DIP-12026N"/>
<dbReference type="FunCoup" id="P76543">
    <property type="interactions" value="145"/>
</dbReference>
<dbReference type="IntAct" id="P76543">
    <property type="interactions" value="8"/>
</dbReference>
<dbReference type="STRING" id="511145.b2443"/>
<dbReference type="PaxDb" id="511145-b2443"/>
<dbReference type="EnsemblBacteria" id="AAC75496">
    <property type="protein sequence ID" value="AAC75496"/>
    <property type="gene ID" value="b2443"/>
</dbReference>
<dbReference type="GeneID" id="946922"/>
<dbReference type="KEGG" id="eco:b2443"/>
<dbReference type="KEGG" id="ecoc:C3026_13565"/>
<dbReference type="PATRIC" id="fig|83333.110.peg.3369"/>
<dbReference type="EchoBASE" id="EB3925"/>
<dbReference type="InParanoid" id="P76543"/>
<dbReference type="BioCyc" id="EcoCyc:G7273-MONOMER"/>
<dbReference type="PRO" id="PR:P76543"/>
<dbReference type="Proteomes" id="UP000000625">
    <property type="component" value="Chromosome"/>
</dbReference>
<reference key="1">
    <citation type="journal article" date="1997" name="Science">
        <title>The complete genome sequence of Escherichia coli K-12.</title>
        <authorList>
            <person name="Blattner F.R."/>
            <person name="Plunkett G. III"/>
            <person name="Bloch C.A."/>
            <person name="Perna N.T."/>
            <person name="Burland V."/>
            <person name="Riley M."/>
            <person name="Collado-Vides J."/>
            <person name="Glasner J.D."/>
            <person name="Rode C.K."/>
            <person name="Mayhew G.F."/>
            <person name="Gregor J."/>
            <person name="Davis N.W."/>
            <person name="Kirkpatrick H.A."/>
            <person name="Goeden M.A."/>
            <person name="Rose D.J."/>
            <person name="Mau B."/>
            <person name="Shao Y."/>
        </authorList>
    </citation>
    <scope>NUCLEOTIDE SEQUENCE [LARGE SCALE GENOMIC DNA]</scope>
    <source>
        <strain>K12 / MG1655 / ATCC 47076</strain>
    </source>
</reference>
<feature type="chain" id="PRO_0000169232" description="Uncharacterized protein YffL">
    <location>
        <begin position="1"/>
        <end position="213"/>
    </location>
</feature>
<feature type="region of interest" description="Disordered" evidence="1">
    <location>
        <begin position="1"/>
        <end position="21"/>
    </location>
</feature>
<feature type="region of interest" description="Disordered" evidence="1">
    <location>
        <begin position="63"/>
        <end position="98"/>
    </location>
</feature>
<feature type="compositionally biased region" description="Basic and acidic residues" evidence="1">
    <location>
        <begin position="1"/>
        <end position="11"/>
    </location>
</feature>
<feature type="compositionally biased region" description="Polar residues" evidence="1">
    <location>
        <begin position="12"/>
        <end position="21"/>
    </location>
</feature>
<feature type="compositionally biased region" description="Basic and acidic residues" evidence="1">
    <location>
        <begin position="63"/>
        <end position="93"/>
    </location>
</feature>
<name>YFFL_ECOLI</name>
<sequence>MFATKDPEFENRINTNKSPRNAATCRGRYEKQAKGEFLMSDMLAVEQETNNDVRQFLNKINELRNKAPKNEETKHEEHTPDNHEETDHHEAKQQEQAWRGNLRYLDTLNRLDEVLPRKLYERWEKEHTVNDEAVLRALCYFAGTGKNSQLGWCRVGRGTIDKRARLSKNTVKKCLDRLVNHFKLVERTEGYIPGSAERECNEYQLLFKPYNMK</sequence>
<organism>
    <name type="scientific">Escherichia coli (strain K12)</name>
    <dbReference type="NCBI Taxonomy" id="83333"/>
    <lineage>
        <taxon>Bacteria</taxon>
        <taxon>Pseudomonadati</taxon>
        <taxon>Pseudomonadota</taxon>
        <taxon>Gammaproteobacteria</taxon>
        <taxon>Enterobacterales</taxon>
        <taxon>Enterobacteriaceae</taxon>
        <taxon>Escherichia</taxon>
    </lineage>
</organism>